<organism>
    <name type="scientific">Vibrio cholerae serotype O1 (strain ATCC 39315 / El Tor Inaba N16961)</name>
    <dbReference type="NCBI Taxonomy" id="243277"/>
    <lineage>
        <taxon>Bacteria</taxon>
        <taxon>Pseudomonadati</taxon>
        <taxon>Pseudomonadota</taxon>
        <taxon>Gammaproteobacteria</taxon>
        <taxon>Vibrionales</taxon>
        <taxon>Vibrionaceae</taxon>
        <taxon>Vibrio</taxon>
    </lineage>
</organism>
<comment type="function">
    <text evidence="1">Part of a membrane-bound complex that couples electron transfer with translocation of ions across the membrane.</text>
</comment>
<comment type="cofactor">
    <cofactor evidence="1">
        <name>FMN</name>
        <dbReference type="ChEBI" id="CHEBI:58210"/>
    </cofactor>
</comment>
<comment type="subunit">
    <text evidence="1">The complex is composed of six subunits: RnfA, RnfB, RnfC, RnfD, RnfE and RnfG.</text>
</comment>
<comment type="subcellular location">
    <subcellularLocation>
        <location evidence="1">Cell inner membrane</location>
        <topology evidence="1">Multi-pass membrane protein</topology>
    </subcellularLocation>
</comment>
<comment type="similarity">
    <text evidence="1">Belongs to the NqrB/RnfD family.</text>
</comment>
<protein>
    <recommendedName>
        <fullName evidence="1">Ion-translocating oxidoreductase complex subunit D</fullName>
        <ecNumber evidence="1">7.-.-.-</ecNumber>
    </recommendedName>
    <alternativeName>
        <fullName evidence="1">Rnf electron transport complex subunit D</fullName>
    </alternativeName>
</protein>
<evidence type="ECO:0000255" key="1">
    <source>
        <dbReference type="HAMAP-Rule" id="MF_00462"/>
    </source>
</evidence>
<keyword id="KW-0997">Cell inner membrane</keyword>
<keyword id="KW-1003">Cell membrane</keyword>
<keyword id="KW-0249">Electron transport</keyword>
<keyword id="KW-0285">Flavoprotein</keyword>
<keyword id="KW-0288">FMN</keyword>
<keyword id="KW-0472">Membrane</keyword>
<keyword id="KW-0597">Phosphoprotein</keyword>
<keyword id="KW-1185">Reference proteome</keyword>
<keyword id="KW-1278">Translocase</keyword>
<keyword id="KW-0812">Transmembrane</keyword>
<keyword id="KW-1133">Transmembrane helix</keyword>
<keyword id="KW-0813">Transport</keyword>
<name>RNFD_VIBCH</name>
<dbReference type="EC" id="7.-.-.-" evidence="1"/>
<dbReference type="EMBL" id="AE003852">
    <property type="protein sequence ID" value="AAF94175.1"/>
    <property type="molecule type" value="Genomic_DNA"/>
</dbReference>
<dbReference type="PIR" id="D82252">
    <property type="entry name" value="D82252"/>
</dbReference>
<dbReference type="RefSeq" id="NP_230660.1">
    <property type="nucleotide sequence ID" value="NC_002505.1"/>
</dbReference>
<dbReference type="SMR" id="Q9KT89"/>
<dbReference type="STRING" id="243277.VC_1014"/>
<dbReference type="DNASU" id="2614267"/>
<dbReference type="EnsemblBacteria" id="AAF94175">
    <property type="protein sequence ID" value="AAF94175"/>
    <property type="gene ID" value="VC_1014"/>
</dbReference>
<dbReference type="KEGG" id="vch:VC_1014"/>
<dbReference type="PATRIC" id="fig|243277.26.peg.968"/>
<dbReference type="eggNOG" id="COG4658">
    <property type="taxonomic scope" value="Bacteria"/>
</dbReference>
<dbReference type="HOGENOM" id="CLU_042020_0_0_6"/>
<dbReference type="Proteomes" id="UP000000584">
    <property type="component" value="Chromosome 1"/>
</dbReference>
<dbReference type="GO" id="GO:0005886">
    <property type="term" value="C:plasma membrane"/>
    <property type="evidence" value="ECO:0000318"/>
    <property type="project" value="GO_Central"/>
</dbReference>
<dbReference type="GO" id="GO:0022900">
    <property type="term" value="P:electron transport chain"/>
    <property type="evidence" value="ECO:0007669"/>
    <property type="project" value="UniProtKB-UniRule"/>
</dbReference>
<dbReference type="GO" id="GO:0055085">
    <property type="term" value="P:transmembrane transport"/>
    <property type="evidence" value="ECO:0007669"/>
    <property type="project" value="InterPro"/>
</dbReference>
<dbReference type="HAMAP" id="MF_00462">
    <property type="entry name" value="RsxD_RnfD"/>
    <property type="match status" value="1"/>
</dbReference>
<dbReference type="InterPro" id="IPR004338">
    <property type="entry name" value="NqrB/RnfD"/>
</dbReference>
<dbReference type="InterPro" id="IPR011303">
    <property type="entry name" value="RnfD_bac"/>
</dbReference>
<dbReference type="NCBIfam" id="NF002011">
    <property type="entry name" value="PRK00816.1"/>
    <property type="match status" value="1"/>
</dbReference>
<dbReference type="NCBIfam" id="TIGR01946">
    <property type="entry name" value="rnfD"/>
    <property type="match status" value="1"/>
</dbReference>
<dbReference type="PANTHER" id="PTHR30578">
    <property type="entry name" value="ELECTRON TRANSPORT COMPLEX PROTEIN RNFD"/>
    <property type="match status" value="1"/>
</dbReference>
<dbReference type="PANTHER" id="PTHR30578:SF0">
    <property type="entry name" value="ION-TRANSLOCATING OXIDOREDUCTASE COMPLEX SUBUNIT D"/>
    <property type="match status" value="1"/>
</dbReference>
<dbReference type="Pfam" id="PF03116">
    <property type="entry name" value="NQR2_RnfD_RnfE"/>
    <property type="match status" value="1"/>
</dbReference>
<gene>
    <name evidence="1" type="primary">rnfD</name>
    <name type="ordered locus">VC_1014</name>
</gene>
<proteinExistence type="inferred from homology"/>
<accession>Q9KT89</accession>
<feature type="chain" id="PRO_0000074463" description="Ion-translocating oxidoreductase complex subunit D">
    <location>
        <begin position="1"/>
        <end position="348"/>
    </location>
</feature>
<feature type="transmembrane region" description="Helical" evidence="1">
    <location>
        <begin position="23"/>
        <end position="43"/>
    </location>
</feature>
<feature type="transmembrane region" description="Helical" evidence="1">
    <location>
        <begin position="44"/>
        <end position="64"/>
    </location>
</feature>
<feature type="transmembrane region" description="Helical" evidence="1">
    <location>
        <begin position="72"/>
        <end position="91"/>
    </location>
</feature>
<feature type="transmembrane region" description="Helical" evidence="1">
    <location>
        <begin position="126"/>
        <end position="146"/>
    </location>
</feature>
<feature type="transmembrane region" description="Helical" evidence="1">
    <location>
        <begin position="214"/>
        <end position="234"/>
    </location>
</feature>
<feature type="transmembrane region" description="Helical" evidence="1">
    <location>
        <begin position="243"/>
        <end position="263"/>
    </location>
</feature>
<feature type="transmembrane region" description="Helical" evidence="1">
    <location>
        <begin position="266"/>
        <end position="286"/>
    </location>
</feature>
<feature type="transmembrane region" description="Helical" evidence="1">
    <location>
        <begin position="300"/>
        <end position="320"/>
    </location>
</feature>
<feature type="transmembrane region" description="Helical" evidence="1">
    <location>
        <begin position="321"/>
        <end position="341"/>
    </location>
</feature>
<feature type="modified residue" description="FMN phosphoryl threonine" evidence="1">
    <location>
        <position position="187"/>
    </location>
</feature>
<sequence length="348" mass="37642">MAFFIASSPHLRSKRSTADVMRWVLACALPGLIAQTYFFGYGTLIQLLLAISVAVALEAGIMLLRKRSPISALRDYSAVVTAWLLAVAIPPLSPWWVVVIGLIFAIVIAKHLYGGLGQNPFNPAMIAYVVLLISFPVQMTSWMAPIKLTAEPSSLVDSFSLIFGGFDSDGLSLQQIRTGIDGITMATPLDAFKTSLKAGHTMSETLTQPQFSGFAGIGWEWVNIAYLLGGLILLKLRIIRWHIPMAMLAGLVFTALLAQLFAPGTTASPMIHLLSGATMLGAFFIATDPVSASTTDKGRLIYGFFIGAMVFLIRSWGGFPDGVAFAVLLANMCVPLIDYYTKPRTYGH</sequence>
<reference key="1">
    <citation type="journal article" date="2000" name="Nature">
        <title>DNA sequence of both chromosomes of the cholera pathogen Vibrio cholerae.</title>
        <authorList>
            <person name="Heidelberg J.F."/>
            <person name="Eisen J.A."/>
            <person name="Nelson W.C."/>
            <person name="Clayton R.A."/>
            <person name="Gwinn M.L."/>
            <person name="Dodson R.J."/>
            <person name="Haft D.H."/>
            <person name="Hickey E.K."/>
            <person name="Peterson J.D."/>
            <person name="Umayam L.A."/>
            <person name="Gill S.R."/>
            <person name="Nelson K.E."/>
            <person name="Read T.D."/>
            <person name="Tettelin H."/>
            <person name="Richardson D.L."/>
            <person name="Ermolaeva M.D."/>
            <person name="Vamathevan J.J."/>
            <person name="Bass S."/>
            <person name="Qin H."/>
            <person name="Dragoi I."/>
            <person name="Sellers P."/>
            <person name="McDonald L.A."/>
            <person name="Utterback T.R."/>
            <person name="Fleischmann R.D."/>
            <person name="Nierman W.C."/>
            <person name="White O."/>
            <person name="Salzberg S.L."/>
            <person name="Smith H.O."/>
            <person name="Colwell R.R."/>
            <person name="Mekalanos J.J."/>
            <person name="Venter J.C."/>
            <person name="Fraser C.M."/>
        </authorList>
    </citation>
    <scope>NUCLEOTIDE SEQUENCE [LARGE SCALE GENOMIC DNA]</scope>
    <source>
        <strain>ATCC 39315 / El Tor Inaba N16961</strain>
    </source>
</reference>